<name>SPP1_TOBAC</name>
<protein>
    <recommendedName>
        <fullName>Sucrose-phosphatase 1</fullName>
        <shortName>NtSPP1</shortName>
        <ecNumber>3.1.3.24</ecNumber>
    </recommendedName>
</protein>
<feature type="chain" id="PRO_0000350622" description="Sucrose-phosphatase 1">
    <location>
        <begin position="1"/>
        <end position="425"/>
    </location>
</feature>
<reference key="1">
    <citation type="journal article" date="2005" name="Planta">
        <title>Decreased sucrose-6-phosphate phosphatase level in transgenic tobacco inhibits photosynthesis, alters carbohydrate partitioning, and reduces growth.</title>
        <authorList>
            <person name="Chen S."/>
            <person name="Hajirezaei M."/>
            <person name="Peisker M."/>
            <person name="Tschiersch H."/>
            <person name="Sonnewald U."/>
            <person name="Boernke F."/>
        </authorList>
    </citation>
    <scope>NUCLEOTIDE SEQUENCE [MRNA]</scope>
    <scope>FUNCTION</scope>
    <scope>ACTIVITY REGULATION</scope>
    <scope>DISRUPTION PHENOTYPE</scope>
    <source>
        <strain>cv. Samsun NN</strain>
    </source>
</reference>
<organism>
    <name type="scientific">Nicotiana tabacum</name>
    <name type="common">Common tobacco</name>
    <dbReference type="NCBI Taxonomy" id="4097"/>
    <lineage>
        <taxon>Eukaryota</taxon>
        <taxon>Viridiplantae</taxon>
        <taxon>Streptophyta</taxon>
        <taxon>Embryophyta</taxon>
        <taxon>Tracheophyta</taxon>
        <taxon>Spermatophyta</taxon>
        <taxon>Magnoliopsida</taxon>
        <taxon>eudicotyledons</taxon>
        <taxon>Gunneridae</taxon>
        <taxon>Pentapetalae</taxon>
        <taxon>asterids</taxon>
        <taxon>lamiids</taxon>
        <taxon>Solanales</taxon>
        <taxon>Solanaceae</taxon>
        <taxon>Nicotianoideae</taxon>
        <taxon>Nicotianeae</taxon>
        <taxon>Nicotiana</taxon>
    </lineage>
</organism>
<sequence length="425" mass="47878">MDQLTSAARLMIVSDLDHTMVDHHDPENLSLLRFNALWEANYRENSLLVFSTGRSPTLYKELRKEKPMLTPDITIMSVGTEITYGNSMEPDDGWEAFLNDKWDRKIVTEETSKFPELTLQSETEQRPHKVSFYVQKDKAQDITGTLSKRLEERGLDVKIIYSGGMDLDILPQGAGKGRALAYLLKKLKSEGKLPNNTLACGDSGNDAELFSIPDVYGVMVANAQEELLQWRAANAKDSPKVIHATERCAAGIIQAIGHFNLGPNTSPRDVTDMSDCKMENFVPAYEVVKFYLFFEKWRRGEIENSDLHLSNLKAVCRPSGTFVHPSGVEKYLEDCINTLRTCHGDKQGKQFRIWVDLVLPTQVGSDSWLVSFKKWELCGEERQCCITTVLLSSKNVTVADGLTWTHVHQTWLQGAAASDSASWFF</sequence>
<evidence type="ECO:0000250" key="1"/>
<evidence type="ECO:0000269" key="2">
    <source>
    </source>
</evidence>
<evidence type="ECO:0000305" key="3"/>
<keyword id="KW-0378">Hydrolase</keyword>
<keyword id="KW-0460">Magnesium</keyword>
<keyword id="KW-1185">Reference proteome</keyword>
<gene>
    <name type="primary">SPP1</name>
</gene>
<proteinExistence type="evidence at transcript level"/>
<comment type="function">
    <text evidence="2">Catalyzes the final step of sucrose synthesis.</text>
</comment>
<comment type="catalytic activity">
    <reaction>
        <text>sucrose 6(F)-phosphate + H2O = sucrose + phosphate</text>
        <dbReference type="Rhea" id="RHEA:19289"/>
        <dbReference type="ChEBI" id="CHEBI:15377"/>
        <dbReference type="ChEBI" id="CHEBI:17992"/>
        <dbReference type="ChEBI" id="CHEBI:43474"/>
        <dbReference type="ChEBI" id="CHEBI:57723"/>
        <dbReference type="EC" id="3.1.3.24"/>
    </reaction>
</comment>
<comment type="cofactor">
    <cofactor evidence="1">
        <name>Mg(2+)</name>
        <dbReference type="ChEBI" id="CHEBI:18420"/>
    </cofactor>
</comment>
<comment type="activity regulation">
    <text evidence="2">Inhibited by EDTA.</text>
</comment>
<comment type="pathway">
    <text>Glycan biosynthesis; sucrose biosynthesis; sucrose from D-fructose 6-phosphate and UDP-alpha-D-glucose: step 2/2.</text>
</comment>
<comment type="subunit">
    <text evidence="1">Homodimer.</text>
</comment>
<comment type="disruption phenotype">
    <text evidence="2">Plants show chlorosis, inhibition of photosynthesis, reduced growth rate and altered photosynthetic carbon partitioning in favor of starch.</text>
</comment>
<comment type="similarity">
    <text evidence="3">Belongs to the sucrose phosphatase family.</text>
</comment>
<accession>Q5IH14</accession>
<dbReference type="EC" id="3.1.3.24"/>
<dbReference type="EMBL" id="AY729655">
    <property type="protein sequence ID" value="AAW32902.1"/>
    <property type="molecule type" value="mRNA"/>
</dbReference>
<dbReference type="RefSeq" id="NP_001311887.1">
    <property type="nucleotide sequence ID" value="NM_001324958.1"/>
</dbReference>
<dbReference type="SMR" id="Q5IH14"/>
<dbReference type="STRING" id="4097.Q5IH14"/>
<dbReference type="PaxDb" id="4097-Q5IH14"/>
<dbReference type="GeneID" id="107767908"/>
<dbReference type="KEGG" id="nta:107767908"/>
<dbReference type="OrthoDB" id="531008at2759"/>
<dbReference type="UniPathway" id="UPA00371">
    <property type="reaction ID" value="UER00546"/>
</dbReference>
<dbReference type="Proteomes" id="UP000084051">
    <property type="component" value="Unplaced"/>
</dbReference>
<dbReference type="GO" id="GO:0000287">
    <property type="term" value="F:magnesium ion binding"/>
    <property type="evidence" value="ECO:0007669"/>
    <property type="project" value="InterPro"/>
</dbReference>
<dbReference type="GO" id="GO:0050307">
    <property type="term" value="F:sucrose-phosphate phosphatase activity"/>
    <property type="evidence" value="ECO:0007669"/>
    <property type="project" value="UniProtKB-EC"/>
</dbReference>
<dbReference type="GO" id="GO:0005986">
    <property type="term" value="P:sucrose biosynthetic process"/>
    <property type="evidence" value="ECO:0007669"/>
    <property type="project" value="UniProtKB-UniPathway"/>
</dbReference>
<dbReference type="CDD" id="cd02605">
    <property type="entry name" value="HAD_SPP"/>
    <property type="match status" value="1"/>
</dbReference>
<dbReference type="Gene3D" id="3.10.450.50">
    <property type="match status" value="1"/>
</dbReference>
<dbReference type="Gene3D" id="3.90.1070.10">
    <property type="match status" value="1"/>
</dbReference>
<dbReference type="Gene3D" id="3.40.50.1000">
    <property type="entry name" value="HAD superfamily/HAD-like"/>
    <property type="match status" value="1"/>
</dbReference>
<dbReference type="InterPro" id="IPR036412">
    <property type="entry name" value="HAD-like_sf"/>
</dbReference>
<dbReference type="InterPro" id="IPR006379">
    <property type="entry name" value="HAD-SF_hydro_IIB"/>
</dbReference>
<dbReference type="InterPro" id="IPR023214">
    <property type="entry name" value="HAD_sf"/>
</dbReference>
<dbReference type="InterPro" id="IPR032710">
    <property type="entry name" value="NTF2-like_dom_sf"/>
</dbReference>
<dbReference type="InterPro" id="IPR006380">
    <property type="entry name" value="SPP-like_dom"/>
</dbReference>
<dbReference type="InterPro" id="IPR013679">
    <property type="entry name" value="SPP_C"/>
</dbReference>
<dbReference type="InterPro" id="IPR051518">
    <property type="entry name" value="Sucrose_Phosphatase"/>
</dbReference>
<dbReference type="InterPro" id="IPR012847">
    <property type="entry name" value="Sucrose_phosphatase_pln/cyn"/>
</dbReference>
<dbReference type="NCBIfam" id="TIGR01484">
    <property type="entry name" value="HAD-SF-IIB"/>
    <property type="match status" value="1"/>
</dbReference>
<dbReference type="NCBIfam" id="TIGR01482">
    <property type="entry name" value="SPP-subfamily"/>
    <property type="match status" value="1"/>
</dbReference>
<dbReference type="NCBIfam" id="TIGR01485">
    <property type="entry name" value="SPP_plant-cyano"/>
    <property type="match status" value="1"/>
</dbReference>
<dbReference type="PANTHER" id="PTHR46521">
    <property type="entry name" value="SUCROSE-PHOSPHATASE 2-RELATED"/>
    <property type="match status" value="1"/>
</dbReference>
<dbReference type="PANTHER" id="PTHR46521:SF4">
    <property type="entry name" value="SUCROSE-PHOSPHATASE 2-RELATED"/>
    <property type="match status" value="1"/>
</dbReference>
<dbReference type="Pfam" id="PF05116">
    <property type="entry name" value="S6PP"/>
    <property type="match status" value="1"/>
</dbReference>
<dbReference type="Pfam" id="PF08472">
    <property type="entry name" value="S6PP_C"/>
    <property type="match status" value="1"/>
</dbReference>
<dbReference type="SFLD" id="SFLDG01141">
    <property type="entry name" value="C2.B.1:_Sucrose_Phosphatase_Li"/>
    <property type="match status" value="1"/>
</dbReference>
<dbReference type="SFLD" id="SFLDF00043">
    <property type="entry name" value="sucrose-phosphatase"/>
    <property type="match status" value="1"/>
</dbReference>
<dbReference type="SUPFAM" id="SSF56784">
    <property type="entry name" value="HAD-like"/>
    <property type="match status" value="1"/>
</dbReference>
<dbReference type="SUPFAM" id="SSF54427">
    <property type="entry name" value="NTF2-like"/>
    <property type="match status" value="1"/>
</dbReference>